<comment type="function">
    <text evidence="1">Cell wall formation. Catalyzes the addition of glutamate to the nucleotide precursor UDP-N-acetylmuramoyl-L-alanine (UMA).</text>
</comment>
<comment type="catalytic activity">
    <reaction evidence="1">
        <text>UDP-N-acetyl-alpha-D-muramoyl-L-alanine + D-glutamate + ATP = UDP-N-acetyl-alpha-D-muramoyl-L-alanyl-D-glutamate + ADP + phosphate + H(+)</text>
        <dbReference type="Rhea" id="RHEA:16429"/>
        <dbReference type="ChEBI" id="CHEBI:15378"/>
        <dbReference type="ChEBI" id="CHEBI:29986"/>
        <dbReference type="ChEBI" id="CHEBI:30616"/>
        <dbReference type="ChEBI" id="CHEBI:43474"/>
        <dbReference type="ChEBI" id="CHEBI:83898"/>
        <dbReference type="ChEBI" id="CHEBI:83900"/>
        <dbReference type="ChEBI" id="CHEBI:456216"/>
        <dbReference type="EC" id="6.3.2.9"/>
    </reaction>
</comment>
<comment type="pathway">
    <text evidence="1">Cell wall biogenesis; peptidoglycan biosynthesis.</text>
</comment>
<comment type="subcellular location">
    <subcellularLocation>
        <location evidence="1">Cytoplasm</location>
    </subcellularLocation>
</comment>
<comment type="similarity">
    <text evidence="1">Belongs to the MurCDEF family.</text>
</comment>
<organism>
    <name type="scientific">Thermoanaerobacter sp. (strain X514)</name>
    <dbReference type="NCBI Taxonomy" id="399726"/>
    <lineage>
        <taxon>Bacteria</taxon>
        <taxon>Bacillati</taxon>
        <taxon>Bacillota</taxon>
        <taxon>Clostridia</taxon>
        <taxon>Thermoanaerobacterales</taxon>
        <taxon>Thermoanaerobacteraceae</taxon>
        <taxon>Thermoanaerobacter</taxon>
    </lineage>
</organism>
<reference key="1">
    <citation type="submission" date="2008-01" db="EMBL/GenBank/DDBJ databases">
        <title>Complete sequence of Thermoanaerobacter sp. X514.</title>
        <authorList>
            <consortium name="US DOE Joint Genome Institute"/>
            <person name="Copeland A."/>
            <person name="Lucas S."/>
            <person name="Lapidus A."/>
            <person name="Barry K."/>
            <person name="Glavina del Rio T."/>
            <person name="Dalin E."/>
            <person name="Tice H."/>
            <person name="Pitluck S."/>
            <person name="Bruce D."/>
            <person name="Goodwin L."/>
            <person name="Saunders E."/>
            <person name="Brettin T."/>
            <person name="Detter J.C."/>
            <person name="Han C."/>
            <person name="Schmutz J."/>
            <person name="Larimer F."/>
            <person name="Land M."/>
            <person name="Hauser L."/>
            <person name="Kyrpides N."/>
            <person name="Kim E."/>
            <person name="Hemme C."/>
            <person name="Fields M.W."/>
            <person name="He Z."/>
            <person name="Zhou J."/>
            <person name="Richardson P."/>
        </authorList>
    </citation>
    <scope>NUCLEOTIDE SEQUENCE [LARGE SCALE GENOMIC DNA]</scope>
    <source>
        <strain>X514</strain>
    </source>
</reference>
<gene>
    <name evidence="1" type="primary">murD</name>
    <name type="ordered locus">Teth514_2011</name>
</gene>
<keyword id="KW-0067">ATP-binding</keyword>
<keyword id="KW-0131">Cell cycle</keyword>
<keyword id="KW-0132">Cell division</keyword>
<keyword id="KW-0133">Cell shape</keyword>
<keyword id="KW-0961">Cell wall biogenesis/degradation</keyword>
<keyword id="KW-0963">Cytoplasm</keyword>
<keyword id="KW-0436">Ligase</keyword>
<keyword id="KW-0547">Nucleotide-binding</keyword>
<keyword id="KW-0573">Peptidoglycan synthesis</keyword>
<accession>B0K3H2</accession>
<sequence length="454" mass="50805">MELKGKKVLVAGLGVSGIALCKVLDSLKAKVIAYDEKEYDVLKENLEEIKSLSIDFRFGKFKKEFLEGVDLIVLSPGVPIDSDIVKTAQEKKIELLGEVEFAYRFSKAPIYAITGTNGKTTTTSLLGEMFKNTGRKVYVAGNIGYPLIYAVMEAAEDDFIVAEISSFQLETIKEFKPKISCIINITPDHLDRHKTFENYRDIKGRIFENQREDEYTVLNYDDPVTWSLKNKAKCRVFPFSRKSLLENGAYIKDGSIYISVNGNAEKIIDIEEIYIPGEHNLENALAASSVAYLSGISADVIANTLKTFKGVEHRIEFVDEINGVKFYNDSKGTNPDASIKAIQALKTPIVLIAGGYDKGSEFDEFVKAFNGKVKKLILIGQTAKKIRDTARKYSYPEDDILFAGTLEEAVKKAYESAKEGDSVLLSPACASWDMFRNFEERGRIFKKAVAELRR</sequence>
<evidence type="ECO:0000255" key="1">
    <source>
        <dbReference type="HAMAP-Rule" id="MF_00639"/>
    </source>
</evidence>
<dbReference type="EC" id="6.3.2.9" evidence="1"/>
<dbReference type="EMBL" id="CP000923">
    <property type="protein sequence ID" value="ABY93283.1"/>
    <property type="molecule type" value="Genomic_DNA"/>
</dbReference>
<dbReference type="RefSeq" id="WP_009052547.1">
    <property type="nucleotide sequence ID" value="NC_010320.1"/>
</dbReference>
<dbReference type="SMR" id="B0K3H2"/>
<dbReference type="KEGG" id="tex:Teth514_2011"/>
<dbReference type="HOGENOM" id="CLU_032540_0_0_9"/>
<dbReference type="UniPathway" id="UPA00219"/>
<dbReference type="Proteomes" id="UP000002155">
    <property type="component" value="Chromosome"/>
</dbReference>
<dbReference type="GO" id="GO:0005737">
    <property type="term" value="C:cytoplasm"/>
    <property type="evidence" value="ECO:0007669"/>
    <property type="project" value="UniProtKB-SubCell"/>
</dbReference>
<dbReference type="GO" id="GO:0005524">
    <property type="term" value="F:ATP binding"/>
    <property type="evidence" value="ECO:0007669"/>
    <property type="project" value="UniProtKB-UniRule"/>
</dbReference>
<dbReference type="GO" id="GO:0008764">
    <property type="term" value="F:UDP-N-acetylmuramoylalanine-D-glutamate ligase activity"/>
    <property type="evidence" value="ECO:0007669"/>
    <property type="project" value="UniProtKB-UniRule"/>
</dbReference>
<dbReference type="GO" id="GO:0051301">
    <property type="term" value="P:cell division"/>
    <property type="evidence" value="ECO:0007669"/>
    <property type="project" value="UniProtKB-KW"/>
</dbReference>
<dbReference type="GO" id="GO:0071555">
    <property type="term" value="P:cell wall organization"/>
    <property type="evidence" value="ECO:0007669"/>
    <property type="project" value="UniProtKB-KW"/>
</dbReference>
<dbReference type="GO" id="GO:0009252">
    <property type="term" value="P:peptidoglycan biosynthetic process"/>
    <property type="evidence" value="ECO:0007669"/>
    <property type="project" value="UniProtKB-UniRule"/>
</dbReference>
<dbReference type="GO" id="GO:0008360">
    <property type="term" value="P:regulation of cell shape"/>
    <property type="evidence" value="ECO:0007669"/>
    <property type="project" value="UniProtKB-KW"/>
</dbReference>
<dbReference type="Gene3D" id="3.90.190.20">
    <property type="entry name" value="Mur ligase, C-terminal domain"/>
    <property type="match status" value="1"/>
</dbReference>
<dbReference type="Gene3D" id="3.40.1190.10">
    <property type="entry name" value="Mur-like, catalytic domain"/>
    <property type="match status" value="1"/>
</dbReference>
<dbReference type="Gene3D" id="3.40.50.720">
    <property type="entry name" value="NAD(P)-binding Rossmann-like Domain"/>
    <property type="match status" value="1"/>
</dbReference>
<dbReference type="HAMAP" id="MF_00639">
    <property type="entry name" value="MurD"/>
    <property type="match status" value="1"/>
</dbReference>
<dbReference type="InterPro" id="IPR036565">
    <property type="entry name" value="Mur-like_cat_sf"/>
</dbReference>
<dbReference type="InterPro" id="IPR004101">
    <property type="entry name" value="Mur_ligase_C"/>
</dbReference>
<dbReference type="InterPro" id="IPR036615">
    <property type="entry name" value="Mur_ligase_C_dom_sf"/>
</dbReference>
<dbReference type="InterPro" id="IPR013221">
    <property type="entry name" value="Mur_ligase_cen"/>
</dbReference>
<dbReference type="InterPro" id="IPR005762">
    <property type="entry name" value="MurD"/>
</dbReference>
<dbReference type="NCBIfam" id="TIGR01087">
    <property type="entry name" value="murD"/>
    <property type="match status" value="1"/>
</dbReference>
<dbReference type="PANTHER" id="PTHR43692">
    <property type="entry name" value="UDP-N-ACETYLMURAMOYLALANINE--D-GLUTAMATE LIGASE"/>
    <property type="match status" value="1"/>
</dbReference>
<dbReference type="PANTHER" id="PTHR43692:SF1">
    <property type="entry name" value="UDP-N-ACETYLMURAMOYLALANINE--D-GLUTAMATE LIGASE"/>
    <property type="match status" value="1"/>
</dbReference>
<dbReference type="Pfam" id="PF02875">
    <property type="entry name" value="Mur_ligase_C"/>
    <property type="match status" value="1"/>
</dbReference>
<dbReference type="Pfam" id="PF08245">
    <property type="entry name" value="Mur_ligase_M"/>
    <property type="match status" value="1"/>
</dbReference>
<dbReference type="Pfam" id="PF21799">
    <property type="entry name" value="MurD-like_N"/>
    <property type="match status" value="1"/>
</dbReference>
<dbReference type="SUPFAM" id="SSF51984">
    <property type="entry name" value="MurCD N-terminal domain"/>
    <property type="match status" value="1"/>
</dbReference>
<dbReference type="SUPFAM" id="SSF53623">
    <property type="entry name" value="MurD-like peptide ligases, catalytic domain"/>
    <property type="match status" value="1"/>
</dbReference>
<dbReference type="SUPFAM" id="SSF53244">
    <property type="entry name" value="MurD-like peptide ligases, peptide-binding domain"/>
    <property type="match status" value="1"/>
</dbReference>
<name>MURD_THEPX</name>
<proteinExistence type="inferred from homology"/>
<protein>
    <recommendedName>
        <fullName evidence="1">UDP-N-acetylmuramoylalanine--D-glutamate ligase</fullName>
        <ecNumber evidence="1">6.3.2.9</ecNumber>
    </recommendedName>
    <alternativeName>
        <fullName evidence="1">D-glutamic acid-adding enzyme</fullName>
    </alternativeName>
    <alternativeName>
        <fullName evidence="1">UDP-N-acetylmuramoyl-L-alanyl-D-glutamate synthetase</fullName>
    </alternativeName>
</protein>
<feature type="chain" id="PRO_1000130880" description="UDP-N-acetylmuramoylalanine--D-glutamate ligase">
    <location>
        <begin position="1"/>
        <end position="454"/>
    </location>
</feature>
<feature type="binding site" evidence="1">
    <location>
        <begin position="115"/>
        <end position="121"/>
    </location>
    <ligand>
        <name>ATP</name>
        <dbReference type="ChEBI" id="CHEBI:30616"/>
    </ligand>
</feature>